<protein>
    <recommendedName>
        <fullName evidence="1">RNA-binding protein Hfq</fullName>
    </recommendedName>
</protein>
<sequence>MSKGHSLQDPFLNALRKERIPVSIFLVNGIKLQGQIESFDQYVVLLKNAVSQMVYKHAISTVVPARNPRATGNPAMAAGATAAPAADEGYGNQ</sequence>
<evidence type="ECO:0000255" key="1">
    <source>
        <dbReference type="HAMAP-Rule" id="MF_00436"/>
    </source>
</evidence>
<evidence type="ECO:0000255" key="2">
    <source>
        <dbReference type="PROSITE-ProRule" id="PRU01346"/>
    </source>
</evidence>
<evidence type="ECO:0000256" key="3">
    <source>
        <dbReference type="SAM" id="MobiDB-lite"/>
    </source>
</evidence>
<dbReference type="EMBL" id="AM286690">
    <property type="protein sequence ID" value="CAL17651.1"/>
    <property type="molecule type" value="Genomic_DNA"/>
</dbReference>
<dbReference type="RefSeq" id="WP_007149110.1">
    <property type="nucleotide sequence ID" value="NC_008260.1"/>
</dbReference>
<dbReference type="SMR" id="Q0VME7"/>
<dbReference type="STRING" id="393595.ABO_2203"/>
<dbReference type="KEGG" id="abo:ABO_2203"/>
<dbReference type="eggNOG" id="COG1923">
    <property type="taxonomic scope" value="Bacteria"/>
</dbReference>
<dbReference type="HOGENOM" id="CLU_113688_2_0_6"/>
<dbReference type="OrthoDB" id="9799751at2"/>
<dbReference type="Proteomes" id="UP000008871">
    <property type="component" value="Chromosome"/>
</dbReference>
<dbReference type="GO" id="GO:0005829">
    <property type="term" value="C:cytosol"/>
    <property type="evidence" value="ECO:0007669"/>
    <property type="project" value="TreeGrafter"/>
</dbReference>
<dbReference type="GO" id="GO:0003723">
    <property type="term" value="F:RNA binding"/>
    <property type="evidence" value="ECO:0007669"/>
    <property type="project" value="UniProtKB-UniRule"/>
</dbReference>
<dbReference type="GO" id="GO:0006355">
    <property type="term" value="P:regulation of DNA-templated transcription"/>
    <property type="evidence" value="ECO:0007669"/>
    <property type="project" value="InterPro"/>
</dbReference>
<dbReference type="GO" id="GO:0043487">
    <property type="term" value="P:regulation of RNA stability"/>
    <property type="evidence" value="ECO:0007669"/>
    <property type="project" value="TreeGrafter"/>
</dbReference>
<dbReference type="GO" id="GO:0045974">
    <property type="term" value="P:regulation of translation, ncRNA-mediated"/>
    <property type="evidence" value="ECO:0007669"/>
    <property type="project" value="TreeGrafter"/>
</dbReference>
<dbReference type="CDD" id="cd01716">
    <property type="entry name" value="Hfq"/>
    <property type="match status" value="1"/>
</dbReference>
<dbReference type="FunFam" id="2.30.30.100:FF:000001">
    <property type="entry name" value="RNA-binding protein Hfq"/>
    <property type="match status" value="1"/>
</dbReference>
<dbReference type="Gene3D" id="2.30.30.100">
    <property type="match status" value="1"/>
</dbReference>
<dbReference type="HAMAP" id="MF_00436">
    <property type="entry name" value="Hfq"/>
    <property type="match status" value="1"/>
</dbReference>
<dbReference type="InterPro" id="IPR005001">
    <property type="entry name" value="Hfq"/>
</dbReference>
<dbReference type="InterPro" id="IPR010920">
    <property type="entry name" value="LSM_dom_sf"/>
</dbReference>
<dbReference type="InterPro" id="IPR047575">
    <property type="entry name" value="Sm"/>
</dbReference>
<dbReference type="NCBIfam" id="TIGR02383">
    <property type="entry name" value="Hfq"/>
    <property type="match status" value="1"/>
</dbReference>
<dbReference type="NCBIfam" id="NF001602">
    <property type="entry name" value="PRK00395.1"/>
    <property type="match status" value="1"/>
</dbReference>
<dbReference type="PANTHER" id="PTHR34772">
    <property type="entry name" value="RNA-BINDING PROTEIN HFQ"/>
    <property type="match status" value="1"/>
</dbReference>
<dbReference type="PANTHER" id="PTHR34772:SF1">
    <property type="entry name" value="RNA-BINDING PROTEIN HFQ"/>
    <property type="match status" value="1"/>
</dbReference>
<dbReference type="Pfam" id="PF17209">
    <property type="entry name" value="Hfq"/>
    <property type="match status" value="1"/>
</dbReference>
<dbReference type="SUPFAM" id="SSF50182">
    <property type="entry name" value="Sm-like ribonucleoproteins"/>
    <property type="match status" value="1"/>
</dbReference>
<dbReference type="PROSITE" id="PS52002">
    <property type="entry name" value="SM"/>
    <property type="match status" value="1"/>
</dbReference>
<gene>
    <name evidence="1" type="primary">hfq</name>
    <name type="ordered locus">ABO_2203</name>
</gene>
<accession>Q0VME7</accession>
<organism>
    <name type="scientific">Alcanivorax borkumensis (strain ATCC 700651 / DSM 11573 / NCIMB 13689 / SK2)</name>
    <dbReference type="NCBI Taxonomy" id="393595"/>
    <lineage>
        <taxon>Bacteria</taxon>
        <taxon>Pseudomonadati</taxon>
        <taxon>Pseudomonadota</taxon>
        <taxon>Gammaproteobacteria</taxon>
        <taxon>Oceanospirillales</taxon>
        <taxon>Alcanivoracaceae</taxon>
        <taxon>Alcanivorax</taxon>
    </lineage>
</organism>
<feature type="chain" id="PRO_0000265135" description="RNA-binding protein Hfq">
    <location>
        <begin position="1"/>
        <end position="93"/>
    </location>
</feature>
<feature type="domain" description="Sm" evidence="2">
    <location>
        <begin position="9"/>
        <end position="68"/>
    </location>
</feature>
<feature type="region of interest" description="Disordered" evidence="3">
    <location>
        <begin position="74"/>
        <end position="93"/>
    </location>
</feature>
<feature type="compositionally biased region" description="Low complexity" evidence="3">
    <location>
        <begin position="74"/>
        <end position="86"/>
    </location>
</feature>
<proteinExistence type="inferred from homology"/>
<keyword id="KW-1185">Reference proteome</keyword>
<keyword id="KW-0694">RNA-binding</keyword>
<keyword id="KW-0346">Stress response</keyword>
<name>HFQ_ALCBS</name>
<comment type="function">
    <text evidence="1">RNA chaperone that binds small regulatory RNA (sRNAs) and mRNAs to facilitate mRNA translational regulation in response to envelope stress, environmental stress and changes in metabolite concentrations. Also binds with high specificity to tRNAs.</text>
</comment>
<comment type="subunit">
    <text evidence="1">Homohexamer.</text>
</comment>
<comment type="similarity">
    <text evidence="1">Belongs to the Hfq family.</text>
</comment>
<reference key="1">
    <citation type="journal article" date="2006" name="Nat. Biotechnol.">
        <title>Genome sequence of the ubiquitous hydrocarbon-degrading marine bacterium Alcanivorax borkumensis.</title>
        <authorList>
            <person name="Schneiker S."/>
            <person name="Martins dos Santos V.A.P."/>
            <person name="Bartels D."/>
            <person name="Bekel T."/>
            <person name="Brecht M."/>
            <person name="Buhrmester J."/>
            <person name="Chernikova T.N."/>
            <person name="Denaro R."/>
            <person name="Ferrer M."/>
            <person name="Gertler C."/>
            <person name="Goesmann A."/>
            <person name="Golyshina O.V."/>
            <person name="Kaminski F."/>
            <person name="Khachane A.N."/>
            <person name="Lang S."/>
            <person name="Linke B."/>
            <person name="McHardy A.C."/>
            <person name="Meyer F."/>
            <person name="Nechitaylo T."/>
            <person name="Puehler A."/>
            <person name="Regenhardt D."/>
            <person name="Rupp O."/>
            <person name="Sabirova J.S."/>
            <person name="Selbitschka W."/>
            <person name="Yakimov M.M."/>
            <person name="Timmis K.N."/>
            <person name="Vorhoelter F.-J."/>
            <person name="Weidner S."/>
            <person name="Kaiser O."/>
            <person name="Golyshin P.N."/>
        </authorList>
    </citation>
    <scope>NUCLEOTIDE SEQUENCE [LARGE SCALE GENOMIC DNA]</scope>
    <source>
        <strain>ATCC 700651 / DSM 11573 / NCIMB 13689 / SK2</strain>
    </source>
</reference>